<comment type="function">
    <text evidence="1">Catalyzes the initial step of the lipid cycle reactions in the biosynthesis of the cell wall peptidoglycan: transfers peptidoglycan precursor phospho-MurNAc-pentapeptide from UDP-MurNAc-pentapeptide onto the lipid carrier undecaprenyl phosphate, yielding undecaprenyl-pyrophosphoryl-MurNAc-pentapeptide, known as lipid I.</text>
</comment>
<comment type="catalytic activity">
    <reaction evidence="1">
        <text>UDP-N-acetyl-alpha-D-muramoyl-L-alanyl-gamma-D-glutamyl-meso-2,6-diaminopimeloyl-D-alanyl-D-alanine + di-trans,octa-cis-undecaprenyl phosphate = di-trans,octa-cis-undecaprenyl diphospho-N-acetyl-alpha-D-muramoyl-L-alanyl-D-glutamyl-meso-2,6-diaminopimeloyl-D-alanyl-D-alanine + UMP</text>
        <dbReference type="Rhea" id="RHEA:28386"/>
        <dbReference type="ChEBI" id="CHEBI:57865"/>
        <dbReference type="ChEBI" id="CHEBI:60392"/>
        <dbReference type="ChEBI" id="CHEBI:61386"/>
        <dbReference type="ChEBI" id="CHEBI:61387"/>
        <dbReference type="EC" id="2.7.8.13"/>
    </reaction>
</comment>
<comment type="cofactor">
    <cofactor evidence="1">
        <name>Mg(2+)</name>
        <dbReference type="ChEBI" id="CHEBI:18420"/>
    </cofactor>
</comment>
<comment type="pathway">
    <text evidence="1">Cell wall biogenesis; peptidoglycan biosynthesis.</text>
</comment>
<comment type="subcellular location">
    <subcellularLocation>
        <location evidence="1">Cell inner membrane</location>
        <topology evidence="1">Multi-pass membrane protein</topology>
    </subcellularLocation>
</comment>
<comment type="similarity">
    <text evidence="1">Belongs to the glycosyltransferase 4 family. MraY subfamily.</text>
</comment>
<accession>A5IAV9</accession>
<proteinExistence type="inferred from homology"/>
<organism>
    <name type="scientific">Legionella pneumophila (strain Corby)</name>
    <dbReference type="NCBI Taxonomy" id="400673"/>
    <lineage>
        <taxon>Bacteria</taxon>
        <taxon>Pseudomonadati</taxon>
        <taxon>Pseudomonadota</taxon>
        <taxon>Gammaproteobacteria</taxon>
        <taxon>Legionellales</taxon>
        <taxon>Legionellaceae</taxon>
        <taxon>Legionella</taxon>
    </lineage>
</organism>
<dbReference type="EC" id="2.7.8.13" evidence="1"/>
<dbReference type="EMBL" id="CP000675">
    <property type="protein sequence ID" value="ABQ54509.1"/>
    <property type="molecule type" value="Genomic_DNA"/>
</dbReference>
<dbReference type="RefSeq" id="WP_011947536.1">
    <property type="nucleotide sequence ID" value="NZ_JAPMSS010000010.1"/>
</dbReference>
<dbReference type="SMR" id="A5IAV9"/>
<dbReference type="KEGG" id="lpc:LPC_0524"/>
<dbReference type="HOGENOM" id="CLU_023982_0_0_6"/>
<dbReference type="UniPathway" id="UPA00219"/>
<dbReference type="GO" id="GO:0005886">
    <property type="term" value="C:plasma membrane"/>
    <property type="evidence" value="ECO:0007669"/>
    <property type="project" value="UniProtKB-SubCell"/>
</dbReference>
<dbReference type="GO" id="GO:0046872">
    <property type="term" value="F:metal ion binding"/>
    <property type="evidence" value="ECO:0007669"/>
    <property type="project" value="UniProtKB-KW"/>
</dbReference>
<dbReference type="GO" id="GO:0008963">
    <property type="term" value="F:phospho-N-acetylmuramoyl-pentapeptide-transferase activity"/>
    <property type="evidence" value="ECO:0007669"/>
    <property type="project" value="UniProtKB-UniRule"/>
</dbReference>
<dbReference type="GO" id="GO:0051992">
    <property type="term" value="F:UDP-N-acetylmuramoyl-L-alanyl-D-glutamyl-meso-2,6-diaminopimelyl-D-alanyl-D-alanine:undecaprenyl-phosphate transferase activity"/>
    <property type="evidence" value="ECO:0007669"/>
    <property type="project" value="RHEA"/>
</dbReference>
<dbReference type="GO" id="GO:0051301">
    <property type="term" value="P:cell division"/>
    <property type="evidence" value="ECO:0007669"/>
    <property type="project" value="UniProtKB-KW"/>
</dbReference>
<dbReference type="GO" id="GO:0071555">
    <property type="term" value="P:cell wall organization"/>
    <property type="evidence" value="ECO:0007669"/>
    <property type="project" value="UniProtKB-KW"/>
</dbReference>
<dbReference type="GO" id="GO:0009252">
    <property type="term" value="P:peptidoglycan biosynthetic process"/>
    <property type="evidence" value="ECO:0007669"/>
    <property type="project" value="UniProtKB-UniRule"/>
</dbReference>
<dbReference type="GO" id="GO:0008360">
    <property type="term" value="P:regulation of cell shape"/>
    <property type="evidence" value="ECO:0007669"/>
    <property type="project" value="UniProtKB-KW"/>
</dbReference>
<dbReference type="CDD" id="cd06852">
    <property type="entry name" value="GT_MraY"/>
    <property type="match status" value="1"/>
</dbReference>
<dbReference type="HAMAP" id="MF_00038">
    <property type="entry name" value="MraY"/>
    <property type="match status" value="1"/>
</dbReference>
<dbReference type="InterPro" id="IPR000715">
    <property type="entry name" value="Glycosyl_transferase_4"/>
</dbReference>
<dbReference type="InterPro" id="IPR003524">
    <property type="entry name" value="PNAcMuramoyl-5peptid_Trfase"/>
</dbReference>
<dbReference type="InterPro" id="IPR018480">
    <property type="entry name" value="PNAcMuramoyl-5peptid_Trfase_CS"/>
</dbReference>
<dbReference type="NCBIfam" id="TIGR00445">
    <property type="entry name" value="mraY"/>
    <property type="match status" value="1"/>
</dbReference>
<dbReference type="PANTHER" id="PTHR22926">
    <property type="entry name" value="PHOSPHO-N-ACETYLMURAMOYL-PENTAPEPTIDE-TRANSFERASE"/>
    <property type="match status" value="1"/>
</dbReference>
<dbReference type="PANTHER" id="PTHR22926:SF5">
    <property type="entry name" value="PHOSPHO-N-ACETYLMURAMOYL-PENTAPEPTIDE-TRANSFERASE HOMOLOG"/>
    <property type="match status" value="1"/>
</dbReference>
<dbReference type="Pfam" id="PF00953">
    <property type="entry name" value="Glycos_transf_4"/>
    <property type="match status" value="1"/>
</dbReference>
<dbReference type="Pfam" id="PF10555">
    <property type="entry name" value="MraY_sig1"/>
    <property type="match status" value="1"/>
</dbReference>
<dbReference type="PROSITE" id="PS01347">
    <property type="entry name" value="MRAY_1"/>
    <property type="match status" value="1"/>
</dbReference>
<dbReference type="PROSITE" id="PS01348">
    <property type="entry name" value="MRAY_2"/>
    <property type="match status" value="1"/>
</dbReference>
<name>MRAY_LEGPC</name>
<protein>
    <recommendedName>
        <fullName evidence="1">Phospho-N-acetylmuramoyl-pentapeptide-transferase</fullName>
        <ecNumber evidence="1">2.7.8.13</ecNumber>
    </recommendedName>
    <alternativeName>
        <fullName evidence="1">UDP-MurNAc-pentapeptide phosphotransferase</fullName>
    </alternativeName>
</protein>
<evidence type="ECO:0000255" key="1">
    <source>
        <dbReference type="HAMAP-Rule" id="MF_00038"/>
    </source>
</evidence>
<reference key="1">
    <citation type="submission" date="2006-11" db="EMBL/GenBank/DDBJ databases">
        <title>Identification and characterization of a new conjugation/ type IVA secretion system (trb/tra) of L. pneumophila Corby localized on a mobile genomic island.</title>
        <authorList>
            <person name="Gloeckner G."/>
            <person name="Albert-Weissenberger C."/>
            <person name="Weinmann E."/>
            <person name="Jacobi S."/>
            <person name="Schunder E."/>
            <person name="Steinert M."/>
            <person name="Buchrieser C."/>
            <person name="Hacker J."/>
            <person name="Heuner K."/>
        </authorList>
    </citation>
    <scope>NUCLEOTIDE SEQUENCE [LARGE SCALE GENOMIC DNA]</scope>
    <source>
        <strain>Corby</strain>
    </source>
</reference>
<sequence length="361" mass="39869">MLYWLTQLLQGQYHAFRVFQYLTFRSILASLTALIVGLLCGPLMIRWLRGLQIGQMVRSDGPQTHLSKAGTPTMGGVLILLAITVSCLLWCDLRQTSLWLVLLVTLANGLVGWVDDYRKLVLKNSKGLPGRWKYFWQSVIALVAVSYLYWNASLPVHTQLTVPFFKTVTWDLGVFFPVLAYFVIVGSSNAVNLTDGLDGLAIMPIVMVAGALGVFAYASSNAVYSNYLGIPYVPNTGELTIFCSSIVGAGLGFLWYNSYPAQVFMGDVGSLALGAALGIVAIVVRQELVLLIMGGLFVIETLSVILQVGYFKYSGGKRLFRMAPLHHHFELKGWSEPKVIVRFWIITVVFVLCGLATLKLR</sequence>
<gene>
    <name evidence="1" type="primary">mraY</name>
    <name type="ordered locus">LPC_0524</name>
</gene>
<keyword id="KW-0131">Cell cycle</keyword>
<keyword id="KW-0132">Cell division</keyword>
<keyword id="KW-0997">Cell inner membrane</keyword>
<keyword id="KW-1003">Cell membrane</keyword>
<keyword id="KW-0133">Cell shape</keyword>
<keyword id="KW-0961">Cell wall biogenesis/degradation</keyword>
<keyword id="KW-0460">Magnesium</keyword>
<keyword id="KW-0472">Membrane</keyword>
<keyword id="KW-0479">Metal-binding</keyword>
<keyword id="KW-0573">Peptidoglycan synthesis</keyword>
<keyword id="KW-0808">Transferase</keyword>
<keyword id="KW-0812">Transmembrane</keyword>
<keyword id="KW-1133">Transmembrane helix</keyword>
<feature type="chain" id="PRO_1000003000" description="Phospho-N-acetylmuramoyl-pentapeptide-transferase">
    <location>
        <begin position="1"/>
        <end position="361"/>
    </location>
</feature>
<feature type="transmembrane region" description="Helical" evidence="1">
    <location>
        <begin position="27"/>
        <end position="47"/>
    </location>
</feature>
<feature type="transmembrane region" description="Helical" evidence="1">
    <location>
        <begin position="70"/>
        <end position="90"/>
    </location>
</feature>
<feature type="transmembrane region" description="Helical" evidence="1">
    <location>
        <begin position="97"/>
        <end position="117"/>
    </location>
</feature>
<feature type="transmembrane region" description="Helical" evidence="1">
    <location>
        <begin position="134"/>
        <end position="154"/>
    </location>
</feature>
<feature type="transmembrane region" description="Helical" evidence="1">
    <location>
        <begin position="167"/>
        <end position="187"/>
    </location>
</feature>
<feature type="transmembrane region" description="Helical" evidence="1">
    <location>
        <begin position="199"/>
        <end position="219"/>
    </location>
</feature>
<feature type="transmembrane region" description="Helical" evidence="1">
    <location>
        <begin position="236"/>
        <end position="256"/>
    </location>
</feature>
<feature type="transmembrane region" description="Helical" evidence="1">
    <location>
        <begin position="263"/>
        <end position="283"/>
    </location>
</feature>
<feature type="transmembrane region" description="Helical" evidence="1">
    <location>
        <begin position="288"/>
        <end position="308"/>
    </location>
</feature>
<feature type="transmembrane region" description="Helical" evidence="1">
    <location>
        <begin position="338"/>
        <end position="358"/>
    </location>
</feature>